<protein>
    <recommendedName>
        <fullName>Transmembrane protein 208</fullName>
    </recommendedName>
</protein>
<reference key="1">
    <citation type="journal article" date="2005" name="Science">
        <title>The transcriptional landscape of the mammalian genome.</title>
        <authorList>
            <person name="Carninci P."/>
            <person name="Kasukawa T."/>
            <person name="Katayama S."/>
            <person name="Gough J."/>
            <person name="Frith M.C."/>
            <person name="Maeda N."/>
            <person name="Oyama R."/>
            <person name="Ravasi T."/>
            <person name="Lenhard B."/>
            <person name="Wells C."/>
            <person name="Kodzius R."/>
            <person name="Shimokawa K."/>
            <person name="Bajic V.B."/>
            <person name="Brenner S.E."/>
            <person name="Batalov S."/>
            <person name="Forrest A.R."/>
            <person name="Zavolan M."/>
            <person name="Davis M.J."/>
            <person name="Wilming L.G."/>
            <person name="Aidinis V."/>
            <person name="Allen J.E."/>
            <person name="Ambesi-Impiombato A."/>
            <person name="Apweiler R."/>
            <person name="Aturaliya R.N."/>
            <person name="Bailey T.L."/>
            <person name="Bansal M."/>
            <person name="Baxter L."/>
            <person name="Beisel K.W."/>
            <person name="Bersano T."/>
            <person name="Bono H."/>
            <person name="Chalk A.M."/>
            <person name="Chiu K.P."/>
            <person name="Choudhary V."/>
            <person name="Christoffels A."/>
            <person name="Clutterbuck D.R."/>
            <person name="Crowe M.L."/>
            <person name="Dalla E."/>
            <person name="Dalrymple B.P."/>
            <person name="de Bono B."/>
            <person name="Della Gatta G."/>
            <person name="di Bernardo D."/>
            <person name="Down T."/>
            <person name="Engstrom P."/>
            <person name="Fagiolini M."/>
            <person name="Faulkner G."/>
            <person name="Fletcher C.F."/>
            <person name="Fukushima T."/>
            <person name="Furuno M."/>
            <person name="Futaki S."/>
            <person name="Gariboldi M."/>
            <person name="Georgii-Hemming P."/>
            <person name="Gingeras T.R."/>
            <person name="Gojobori T."/>
            <person name="Green R.E."/>
            <person name="Gustincich S."/>
            <person name="Harbers M."/>
            <person name="Hayashi Y."/>
            <person name="Hensch T.K."/>
            <person name="Hirokawa N."/>
            <person name="Hill D."/>
            <person name="Huminiecki L."/>
            <person name="Iacono M."/>
            <person name="Ikeo K."/>
            <person name="Iwama A."/>
            <person name="Ishikawa T."/>
            <person name="Jakt M."/>
            <person name="Kanapin A."/>
            <person name="Katoh M."/>
            <person name="Kawasawa Y."/>
            <person name="Kelso J."/>
            <person name="Kitamura H."/>
            <person name="Kitano H."/>
            <person name="Kollias G."/>
            <person name="Krishnan S.P."/>
            <person name="Kruger A."/>
            <person name="Kummerfeld S.K."/>
            <person name="Kurochkin I.V."/>
            <person name="Lareau L.F."/>
            <person name="Lazarevic D."/>
            <person name="Lipovich L."/>
            <person name="Liu J."/>
            <person name="Liuni S."/>
            <person name="McWilliam S."/>
            <person name="Madan Babu M."/>
            <person name="Madera M."/>
            <person name="Marchionni L."/>
            <person name="Matsuda H."/>
            <person name="Matsuzawa S."/>
            <person name="Miki H."/>
            <person name="Mignone F."/>
            <person name="Miyake S."/>
            <person name="Morris K."/>
            <person name="Mottagui-Tabar S."/>
            <person name="Mulder N."/>
            <person name="Nakano N."/>
            <person name="Nakauchi H."/>
            <person name="Ng P."/>
            <person name="Nilsson R."/>
            <person name="Nishiguchi S."/>
            <person name="Nishikawa S."/>
            <person name="Nori F."/>
            <person name="Ohara O."/>
            <person name="Okazaki Y."/>
            <person name="Orlando V."/>
            <person name="Pang K.C."/>
            <person name="Pavan W.J."/>
            <person name="Pavesi G."/>
            <person name="Pesole G."/>
            <person name="Petrovsky N."/>
            <person name="Piazza S."/>
            <person name="Reed J."/>
            <person name="Reid J.F."/>
            <person name="Ring B.Z."/>
            <person name="Ringwald M."/>
            <person name="Rost B."/>
            <person name="Ruan Y."/>
            <person name="Salzberg S.L."/>
            <person name="Sandelin A."/>
            <person name="Schneider C."/>
            <person name="Schoenbach C."/>
            <person name="Sekiguchi K."/>
            <person name="Semple C.A."/>
            <person name="Seno S."/>
            <person name="Sessa L."/>
            <person name="Sheng Y."/>
            <person name="Shibata Y."/>
            <person name="Shimada H."/>
            <person name="Shimada K."/>
            <person name="Silva D."/>
            <person name="Sinclair B."/>
            <person name="Sperling S."/>
            <person name="Stupka E."/>
            <person name="Sugiura K."/>
            <person name="Sultana R."/>
            <person name="Takenaka Y."/>
            <person name="Taki K."/>
            <person name="Tammoja K."/>
            <person name="Tan S.L."/>
            <person name="Tang S."/>
            <person name="Taylor M.S."/>
            <person name="Tegner J."/>
            <person name="Teichmann S.A."/>
            <person name="Ueda H.R."/>
            <person name="van Nimwegen E."/>
            <person name="Verardo R."/>
            <person name="Wei C.L."/>
            <person name="Yagi K."/>
            <person name="Yamanishi H."/>
            <person name="Zabarovsky E."/>
            <person name="Zhu S."/>
            <person name="Zimmer A."/>
            <person name="Hide W."/>
            <person name="Bult C."/>
            <person name="Grimmond S.M."/>
            <person name="Teasdale R.D."/>
            <person name="Liu E.T."/>
            <person name="Brusic V."/>
            <person name="Quackenbush J."/>
            <person name="Wahlestedt C."/>
            <person name="Mattick J.S."/>
            <person name="Hume D.A."/>
            <person name="Kai C."/>
            <person name="Sasaki D."/>
            <person name="Tomaru Y."/>
            <person name="Fukuda S."/>
            <person name="Kanamori-Katayama M."/>
            <person name="Suzuki M."/>
            <person name="Aoki J."/>
            <person name="Arakawa T."/>
            <person name="Iida J."/>
            <person name="Imamura K."/>
            <person name="Itoh M."/>
            <person name="Kato T."/>
            <person name="Kawaji H."/>
            <person name="Kawagashira N."/>
            <person name="Kawashima T."/>
            <person name="Kojima M."/>
            <person name="Kondo S."/>
            <person name="Konno H."/>
            <person name="Nakano K."/>
            <person name="Ninomiya N."/>
            <person name="Nishio T."/>
            <person name="Okada M."/>
            <person name="Plessy C."/>
            <person name="Shibata K."/>
            <person name="Shiraki T."/>
            <person name="Suzuki S."/>
            <person name="Tagami M."/>
            <person name="Waki K."/>
            <person name="Watahiki A."/>
            <person name="Okamura-Oho Y."/>
            <person name="Suzuki H."/>
            <person name="Kawai J."/>
            <person name="Hayashizaki Y."/>
        </authorList>
    </citation>
    <scope>NUCLEOTIDE SEQUENCE [LARGE SCALE MRNA] (ISOFORMS 1 AND 2)</scope>
    <source>
        <strain>C57BL/6J</strain>
        <tissue>Kidney</tissue>
        <tissue>Pancreas</tissue>
        <tissue>Testis</tissue>
    </source>
</reference>
<reference key="2">
    <citation type="journal article" date="2004" name="Genome Res.">
        <title>The status, quality, and expansion of the NIH full-length cDNA project: the Mammalian Gene Collection (MGC).</title>
        <authorList>
            <consortium name="The MGC Project Team"/>
        </authorList>
    </citation>
    <scope>NUCLEOTIDE SEQUENCE [LARGE SCALE MRNA]</scope>
    <source>
        <strain>FVB/N</strain>
        <tissue>Kidney</tissue>
    </source>
</reference>
<comment type="function">
    <text evidence="1">May function as a negative regulator of endoplasmic reticulum-stress induced autophagy.</text>
</comment>
<comment type="subcellular location">
    <subcellularLocation>
        <location evidence="1">Endoplasmic reticulum membrane</location>
        <topology evidence="2">Multi-pass membrane protein</topology>
    </subcellularLocation>
</comment>
<comment type="alternative products">
    <event type="alternative splicing"/>
    <isoform>
        <id>Q9CR96-1</id>
        <name>1</name>
        <sequence type="displayed"/>
    </isoform>
    <isoform>
        <id>Q9CR96-2</id>
        <name>2</name>
        <sequence type="described" ref="VSP_032506"/>
    </isoform>
</comment>
<comment type="similarity">
    <text evidence="4">Belongs to the TMEM208 family.</text>
</comment>
<dbReference type="EMBL" id="AK002499">
    <property type="protein sequence ID" value="BAB22147.1"/>
    <property type="molecule type" value="mRNA"/>
</dbReference>
<dbReference type="EMBL" id="AK005662">
    <property type="protein sequence ID" value="BAB24174.1"/>
    <property type="molecule type" value="mRNA"/>
</dbReference>
<dbReference type="EMBL" id="AK131833">
    <property type="protein sequence ID" value="BAE20823.1"/>
    <property type="molecule type" value="mRNA"/>
</dbReference>
<dbReference type="EMBL" id="BC024608">
    <property type="protein sequence ID" value="AAH24608.1"/>
    <property type="molecule type" value="mRNA"/>
</dbReference>
<dbReference type="CCDS" id="CCDS22599.1">
    <molecule id="Q9CR96-1"/>
</dbReference>
<dbReference type="RefSeq" id="NP_001365895.1">
    <molecule id="Q9CR96-2"/>
    <property type="nucleotide sequence ID" value="NM_001378966.1"/>
</dbReference>
<dbReference type="RefSeq" id="NP_079762.1">
    <molecule id="Q9CR96-1"/>
    <property type="nucleotide sequence ID" value="NM_025486.3"/>
</dbReference>
<dbReference type="BioGRID" id="211380">
    <property type="interactions" value="3"/>
</dbReference>
<dbReference type="FunCoup" id="Q9CR96">
    <property type="interactions" value="308"/>
</dbReference>
<dbReference type="STRING" id="10090.ENSMUSP00000015000"/>
<dbReference type="SwissPalm" id="Q9CR96"/>
<dbReference type="PaxDb" id="10090-ENSMUSP00000015000"/>
<dbReference type="ProteomicsDB" id="258914">
    <molecule id="Q9CR96-1"/>
</dbReference>
<dbReference type="ProteomicsDB" id="258915">
    <molecule id="Q9CR96-2"/>
</dbReference>
<dbReference type="Pumba" id="Q9CR96"/>
<dbReference type="Antibodypedia" id="48545">
    <property type="antibodies" value="24 antibodies from 10 providers"/>
</dbReference>
<dbReference type="DNASU" id="66320"/>
<dbReference type="Ensembl" id="ENSMUST00000015000.12">
    <molecule id="Q9CR96-1"/>
    <property type="protein sequence ID" value="ENSMUSP00000015000.5"/>
    <property type="gene ID" value="ENSMUSG00000014856.13"/>
</dbReference>
<dbReference type="Ensembl" id="ENSMUST00000098453.9">
    <molecule id="Q9CR96-2"/>
    <property type="protein sequence ID" value="ENSMUSP00000096052.3"/>
    <property type="gene ID" value="ENSMUSG00000014856.13"/>
</dbReference>
<dbReference type="GeneID" id="66320"/>
<dbReference type="KEGG" id="mmu:66320"/>
<dbReference type="UCSC" id="uc009ncs.2">
    <molecule id="Q9CR96-1"/>
    <property type="organism name" value="mouse"/>
</dbReference>
<dbReference type="AGR" id="MGI:1913570"/>
<dbReference type="CTD" id="29100"/>
<dbReference type="MGI" id="MGI:1913570">
    <property type="gene designation" value="Tmem208"/>
</dbReference>
<dbReference type="VEuPathDB" id="HostDB:ENSMUSG00000014856"/>
<dbReference type="eggNOG" id="KOG3269">
    <property type="taxonomic scope" value="Eukaryota"/>
</dbReference>
<dbReference type="GeneTree" id="ENSGT00390000008139"/>
<dbReference type="HOGENOM" id="CLU_094308_3_0_1"/>
<dbReference type="InParanoid" id="Q9CR96"/>
<dbReference type="OMA" id="PIRAGWM"/>
<dbReference type="PhylomeDB" id="Q9CR96"/>
<dbReference type="TreeFam" id="TF318118"/>
<dbReference type="BioGRID-ORCS" id="66320">
    <property type="hits" value="22 hits in 81 CRISPR screens"/>
</dbReference>
<dbReference type="ChiTaRS" id="Tmem208">
    <property type="organism name" value="mouse"/>
</dbReference>
<dbReference type="PRO" id="PR:Q9CR96"/>
<dbReference type="Proteomes" id="UP000000589">
    <property type="component" value="Chromosome 8"/>
</dbReference>
<dbReference type="RNAct" id="Q9CR96">
    <property type="molecule type" value="protein"/>
</dbReference>
<dbReference type="Bgee" id="ENSMUSG00000014856">
    <property type="expression patterns" value="Expressed in seminal vesicle and 258 other cell types or tissues"/>
</dbReference>
<dbReference type="ExpressionAtlas" id="Q9CR96">
    <property type="expression patterns" value="baseline and differential"/>
</dbReference>
<dbReference type="GO" id="GO:0005789">
    <property type="term" value="C:endoplasmic reticulum membrane"/>
    <property type="evidence" value="ECO:0000250"/>
    <property type="project" value="UniProtKB"/>
</dbReference>
<dbReference type="GO" id="GO:0006914">
    <property type="term" value="P:autophagy"/>
    <property type="evidence" value="ECO:0007669"/>
    <property type="project" value="UniProtKB-KW"/>
</dbReference>
<dbReference type="InterPro" id="IPR008506">
    <property type="entry name" value="SND2/TMEM208"/>
</dbReference>
<dbReference type="PANTHER" id="PTHR13505">
    <property type="entry name" value="TRANSMEMBRANE PROTEIN 208"/>
    <property type="match status" value="1"/>
</dbReference>
<dbReference type="PANTHER" id="PTHR13505:SF7">
    <property type="entry name" value="TRANSMEMBRANE PROTEIN 208"/>
    <property type="match status" value="1"/>
</dbReference>
<dbReference type="Pfam" id="PF05620">
    <property type="entry name" value="TMEM208_SND2"/>
    <property type="match status" value="1"/>
</dbReference>
<gene>
    <name type="primary">Tmem208</name>
</gene>
<feature type="chain" id="PRO_0000325968" description="Transmembrane protein 208">
    <location>
        <begin position="1"/>
        <end position="173"/>
    </location>
</feature>
<feature type="transmembrane region" description="Helical" evidence="2">
    <location>
        <begin position="25"/>
        <end position="45"/>
    </location>
</feature>
<feature type="transmembrane region" description="Helical" evidence="2">
    <location>
        <begin position="51"/>
        <end position="68"/>
    </location>
</feature>
<feature type="transmembrane region" description="Helical" evidence="2">
    <location>
        <begin position="105"/>
        <end position="129"/>
    </location>
</feature>
<feature type="modified residue" description="N-acetylmethionine" evidence="1">
    <location>
        <position position="1"/>
    </location>
</feature>
<feature type="splice variant" id="VSP_032506" description="In isoform 2." evidence="3">
    <original>HLKDVILLTAIVQVLSCFSLYIWSFWLLAPGRALYLLWVNVLGPWFTADSGAPAPELNEKRQRRQERRQMKRL</original>
    <variation>VGFFSGWILPEHHPPDDPSVSSTVAPASVSARPWARAACFSVSAAATFSRNRALKREACQRWCLTQVQPRVAHMPC</variation>
    <location>
        <begin position="101"/>
        <end position="173"/>
    </location>
</feature>
<feature type="sequence conflict" description="In Ref. 2; AAH24608." evidence="4" ref="2">
    <original>G</original>
    <variation>D</variation>
    <location>
        <position position="8"/>
    </location>
</feature>
<evidence type="ECO:0000250" key="1">
    <source>
        <dbReference type="UniProtKB" id="Q9BTX3"/>
    </source>
</evidence>
<evidence type="ECO:0000255" key="2"/>
<evidence type="ECO:0000303" key="3">
    <source>
    </source>
</evidence>
<evidence type="ECO:0000305" key="4"/>
<proteinExistence type="evidence at transcript level"/>
<name>TM208_MOUSE</name>
<accession>Q9CR96</accession>
<accession>Q3V2H5</accession>
<accession>Q8R1F8</accession>
<organism>
    <name type="scientific">Mus musculus</name>
    <name type="common">Mouse</name>
    <dbReference type="NCBI Taxonomy" id="10090"/>
    <lineage>
        <taxon>Eukaryota</taxon>
        <taxon>Metazoa</taxon>
        <taxon>Chordata</taxon>
        <taxon>Craniata</taxon>
        <taxon>Vertebrata</taxon>
        <taxon>Euteleostomi</taxon>
        <taxon>Mammalia</taxon>
        <taxon>Eutheria</taxon>
        <taxon>Euarchontoglires</taxon>
        <taxon>Glires</taxon>
        <taxon>Rodentia</taxon>
        <taxon>Myomorpha</taxon>
        <taxon>Muroidea</taxon>
        <taxon>Muridae</taxon>
        <taxon>Murinae</taxon>
        <taxon>Mus</taxon>
        <taxon>Mus</taxon>
    </lineage>
</organism>
<sequence>MAPKGKVGTRGKKQIFEENKETLKFYLRIILGANAIYCLVTLVFFYSSASFWAWMALGFSLAVYGASYHSMSSMARASFSEDGSLMDGGMDLNMEQGMAEHLKDVILLTAIVQVLSCFSLYIWSFWLLAPGRALYLLWVNVLGPWFTADSGAPAPELNEKRQRRQERRQMKRL</sequence>
<keyword id="KW-0007">Acetylation</keyword>
<keyword id="KW-0025">Alternative splicing</keyword>
<keyword id="KW-0072">Autophagy</keyword>
<keyword id="KW-0256">Endoplasmic reticulum</keyword>
<keyword id="KW-0472">Membrane</keyword>
<keyword id="KW-1185">Reference proteome</keyword>
<keyword id="KW-0812">Transmembrane</keyword>
<keyword id="KW-1133">Transmembrane helix</keyword>